<dbReference type="EC" id="2.4.1.80" evidence="4"/>
<dbReference type="EMBL" id="AY112732">
    <property type="protein sequence ID" value="AAM49061.1"/>
    <property type="molecule type" value="mRNA"/>
</dbReference>
<dbReference type="EMBL" id="BC089245">
    <property type="protein sequence ID" value="AAH89245.1"/>
    <property type="molecule type" value="mRNA"/>
</dbReference>
<dbReference type="RefSeq" id="NP_001083944.1">
    <property type="nucleotide sequence ID" value="NM_001090475.1"/>
</dbReference>
<dbReference type="SMR" id="Q8AY29"/>
<dbReference type="SwissLipids" id="SLP:000000788"/>
<dbReference type="CAZy" id="GT21">
    <property type="family name" value="Glycosyltransferase Family 21"/>
</dbReference>
<dbReference type="DNASU" id="399204"/>
<dbReference type="GeneID" id="399204"/>
<dbReference type="KEGG" id="xla:399204"/>
<dbReference type="AGR" id="Xenbase:XB-GENE-6254211"/>
<dbReference type="CTD" id="399204"/>
<dbReference type="Xenbase" id="XB-GENE-6254211">
    <property type="gene designation" value="ugcg.L"/>
</dbReference>
<dbReference type="OrthoDB" id="1483400at2759"/>
<dbReference type="UniPathway" id="UPA00222"/>
<dbReference type="Proteomes" id="UP000186698">
    <property type="component" value="Chromosome 1L"/>
</dbReference>
<dbReference type="Bgee" id="399204">
    <property type="expression patterns" value="Expressed in intestine and 18 other cell types or tissues"/>
</dbReference>
<dbReference type="GO" id="GO:0005794">
    <property type="term" value="C:Golgi apparatus"/>
    <property type="evidence" value="ECO:0000314"/>
    <property type="project" value="UniProtKB"/>
</dbReference>
<dbReference type="GO" id="GO:0000139">
    <property type="term" value="C:Golgi membrane"/>
    <property type="evidence" value="ECO:0007669"/>
    <property type="project" value="UniProtKB-SubCell"/>
</dbReference>
<dbReference type="GO" id="GO:0016020">
    <property type="term" value="C:membrane"/>
    <property type="evidence" value="ECO:0000318"/>
    <property type="project" value="GO_Central"/>
</dbReference>
<dbReference type="GO" id="GO:0008120">
    <property type="term" value="F:ceramide glucosyltransferase activity"/>
    <property type="evidence" value="ECO:0000314"/>
    <property type="project" value="UniProtKB"/>
</dbReference>
<dbReference type="GO" id="GO:0006679">
    <property type="term" value="P:glucosylceramide biosynthetic process"/>
    <property type="evidence" value="ECO:0000318"/>
    <property type="project" value="GO_Central"/>
</dbReference>
<dbReference type="GO" id="GO:0046479">
    <property type="term" value="P:glycosphingolipid catabolic process"/>
    <property type="evidence" value="ECO:0000314"/>
    <property type="project" value="UniProtKB"/>
</dbReference>
<dbReference type="CDD" id="cd02520">
    <property type="entry name" value="Glucosylceramide_synthase"/>
    <property type="match status" value="1"/>
</dbReference>
<dbReference type="FunFam" id="3.90.550.10:FF:000041">
    <property type="entry name" value="UDP-glucose ceramide glucosyltransferase"/>
    <property type="match status" value="1"/>
</dbReference>
<dbReference type="Gene3D" id="3.90.550.10">
    <property type="entry name" value="Spore Coat Polysaccharide Biosynthesis Protein SpsA, Chain A"/>
    <property type="match status" value="1"/>
</dbReference>
<dbReference type="InterPro" id="IPR025993">
    <property type="entry name" value="Ceramide_glucosylTrfase"/>
</dbReference>
<dbReference type="InterPro" id="IPR029044">
    <property type="entry name" value="Nucleotide-diphossugar_trans"/>
</dbReference>
<dbReference type="PANTHER" id="PTHR12726">
    <property type="entry name" value="CERAMIDE GLUCOSYLTRANSFERASE"/>
    <property type="match status" value="1"/>
</dbReference>
<dbReference type="PANTHER" id="PTHR12726:SF0">
    <property type="entry name" value="CERAMIDE GLUCOSYLTRANSFERASE"/>
    <property type="match status" value="1"/>
</dbReference>
<dbReference type="Pfam" id="PF13506">
    <property type="entry name" value="Glyco_transf_21"/>
    <property type="match status" value="1"/>
</dbReference>
<dbReference type="SUPFAM" id="SSF53448">
    <property type="entry name" value="Nucleotide-diphospho-sugar transferases"/>
    <property type="match status" value="1"/>
</dbReference>
<gene>
    <name type="primary">ugcg-a</name>
    <name evidence="8" type="synonym">ugcg</name>
</gene>
<protein>
    <recommendedName>
        <fullName>Ceramide glucosyltransferase-A</fullName>
        <shortName evidence="5">XLCGT</shortName>
        <ecNumber evidence="4">2.4.1.80</ecNumber>
    </recommendedName>
    <alternativeName>
        <fullName evidence="6">Glycosylceramide synthase-A</fullName>
    </alternativeName>
    <alternativeName>
        <fullName>UDP-glucose ceramide glucosyltransferase-A</fullName>
    </alternativeName>
</protein>
<organism>
    <name type="scientific">Xenopus laevis</name>
    <name type="common">African clawed frog</name>
    <dbReference type="NCBI Taxonomy" id="8355"/>
    <lineage>
        <taxon>Eukaryota</taxon>
        <taxon>Metazoa</taxon>
        <taxon>Chordata</taxon>
        <taxon>Craniata</taxon>
        <taxon>Vertebrata</taxon>
        <taxon>Euteleostomi</taxon>
        <taxon>Amphibia</taxon>
        <taxon>Batrachia</taxon>
        <taxon>Anura</taxon>
        <taxon>Pipoidea</taxon>
        <taxon>Pipidae</taxon>
        <taxon>Xenopodinae</taxon>
        <taxon>Xenopus</taxon>
        <taxon>Xenopus</taxon>
    </lineage>
</organism>
<proteinExistence type="evidence at protein level"/>
<sequence length="394" mass="44651">MAVLDLALQGLAIFGCVLFFVLWFMHFLSIVYTRLHLNKKISDKQPYSKLPGVSLLKPLKGVDPNLINNLETFFELDYPKFEILLCVQDLDDPAVDVCKKLLGKYPSDDAKLFIGGKKVGINPKINNLMPGYEVAKYDLIWICDSGIKVKPDTLTDMANQMTEKVGLVHGLPYVADRQGFAATLEQVYFGTSHPRSYISANVTGFKCVTGMSCLMRKEVLDQAGGLIAFAQYIAEDYFMAKAIADRGWKFSMATQVAMQNSGCYSISQFQSRMIRWAKLRINMLPATIICEPISECFVASLIIGWAAHHIFRWDIMVFFMCHCLAWFIFDYIQLRGVQGGPLNFSKLDYAVAWFIRESMTIYIFLSALWDPTISWRTGRFRLRCGGTAEEILDV</sequence>
<reference evidence="6 9" key="1">
    <citation type="journal article" date="2008" name="Dev. Dyn.">
        <title>Cloning and functional characterization of two key enzymes of glycosphingolipid biosynthesis in the amphibian Xenopus laevis.</title>
        <authorList>
            <person name="Luque M.E."/>
            <person name="Crespo P.M."/>
            <person name="Monaco M.E."/>
            <person name="Aybar M.J."/>
            <person name="Daniotti J.L."/>
            <person name="Sanchez S.S."/>
        </authorList>
    </citation>
    <scope>NUCLEOTIDE SEQUENCE [MRNA]</scope>
    <scope>FUNCTION</scope>
    <scope>CATALYTIC ACTIVITY</scope>
    <scope>PATHWAY</scope>
    <scope>SUBCELLULAR LOCATION</scope>
    <scope>TISSUE SPECIFICITY</scope>
    <scope>DEVELOPMENTAL STAGE</scope>
</reference>
<reference evidence="8" key="2">
    <citation type="submission" date="2005-01" db="EMBL/GenBank/DDBJ databases">
        <authorList>
            <consortium name="NIH - Xenopus Gene Collection (XGC) project"/>
        </authorList>
    </citation>
    <scope>NUCLEOTIDE SEQUENCE [LARGE SCALE MRNA]</scope>
    <source>
        <tissue evidence="8">Egg</tissue>
    </source>
</reference>
<feature type="chain" id="PRO_0000376854" description="Ceramide glucosyltransferase-A">
    <location>
        <begin position="1"/>
        <end position="394"/>
    </location>
</feature>
<feature type="topological domain" description="Lumenal" evidence="3">
    <location>
        <begin position="1"/>
        <end position="10"/>
    </location>
</feature>
<feature type="transmembrane region" description="Helical" evidence="3">
    <location>
        <begin position="11"/>
        <end position="32"/>
    </location>
</feature>
<feature type="topological domain" description="Cytoplasmic" evidence="3">
    <location>
        <begin position="33"/>
        <end position="195"/>
    </location>
</feature>
<feature type="transmembrane region" description="Helical" evidence="3">
    <location>
        <begin position="196"/>
        <end position="215"/>
    </location>
</feature>
<feature type="topological domain" description="Lumenal" evidence="3">
    <location>
        <begin position="216"/>
        <end position="287"/>
    </location>
</feature>
<feature type="transmembrane region" description="Helical" evidence="3">
    <location>
        <begin position="288"/>
        <end position="304"/>
    </location>
</feature>
<feature type="topological domain" description="Cytoplasmic" evidence="3">
    <location>
        <begin position="305"/>
        <end position="309"/>
    </location>
</feature>
<feature type="transmembrane region" description="Helical" evidence="3">
    <location>
        <begin position="310"/>
        <end position="328"/>
    </location>
</feature>
<feature type="topological domain" description="Lumenal" evidence="3">
    <location>
        <begin position="329"/>
        <end position="348"/>
    </location>
</feature>
<feature type="transmembrane region" description="Helical" evidence="3">
    <location>
        <begin position="349"/>
        <end position="369"/>
    </location>
</feature>
<feature type="topological domain" description="Cytoplasmic" evidence="3">
    <location>
        <begin position="370"/>
        <end position="394"/>
    </location>
</feature>
<feature type="short sequence motif" description="D1" evidence="6">
    <location>
        <position position="92"/>
    </location>
</feature>
<feature type="short sequence motif" description="D2" evidence="6">
    <location>
        <position position="144"/>
    </location>
</feature>
<feature type="short sequence motif" description="D3" evidence="6">
    <location>
        <position position="236"/>
    </location>
</feature>
<feature type="short sequence motif" description="(Q/R)XXRW" evidence="6">
    <location>
        <begin position="272"/>
        <end position="276"/>
    </location>
</feature>
<feature type="active site" description="Proton acceptor" evidence="2">
    <location>
        <position position="236"/>
    </location>
</feature>
<feature type="sequence conflict" description="In Ref. 2; AAH89245." evidence="6" ref="2">
    <original>D</original>
    <variation>V</variation>
    <location>
        <position position="108"/>
    </location>
</feature>
<keyword id="KW-0217">Developmental protein</keyword>
<keyword id="KW-0328">Glycosyltransferase</keyword>
<keyword id="KW-0333">Golgi apparatus</keyword>
<keyword id="KW-0444">Lipid biosynthesis</keyword>
<keyword id="KW-0443">Lipid metabolism</keyword>
<keyword id="KW-0472">Membrane</keyword>
<keyword id="KW-1185">Reference proteome</keyword>
<keyword id="KW-0746">Sphingolipid metabolism</keyword>
<keyword id="KW-0808">Transferase</keyword>
<keyword id="KW-0812">Transmembrane</keyword>
<keyword id="KW-1133">Transmembrane helix</keyword>
<comment type="function">
    <text evidence="1 4 5">Participates in the initial step of the glucosylceramide-based glycosphingolipid/GSL synthetic pathway at the cytosolic surface of the Golgi. Catalyzes the transfer of glucose from UDP-glucose to ceramide to produce glucosylceramide/GlcCer (such as beta-D-glucosyl-(1&lt;-&gt;1')-N-acylsphing-4-enine) (PubMed:18095347). Glucosylceramide is the core component of glycosphingolipids/GSLs, amphipathic molecules consisting of a ceramide lipid moiety embedded in the outer leaflet of the membrane, linked to one of hundreds of different externally oriented oligosaccharide structures. Glycosphingolipids are essential components of membrane microdomains that mediate membrane trafficking and signal transduction. They are implicated in many fundamental cellular processes, including growth, differentiation, migration, morphogenesis, cell-to-cell and cell-to-matrix interactions (PubMed:18095347). Glycosphingolipids are required for convergence extension movements during early development (PubMed:18095347). Catalyzes the synthesis of xylosylceramide/XylCer (such as beta-D-xylosyl-(1&lt;-&gt;1')-N-acylsphing-4-enine) using UDP-Xyl as xylose donor (By similarity).</text>
</comment>
<comment type="catalytic activity">
    <reaction evidence="4">
        <text>an N-acylsphing-4-enine + UDP-alpha-D-glucose = a beta-D-glucosyl-(1&lt;-&gt;1')-N-acylsphing-4-enine + UDP + H(+)</text>
        <dbReference type="Rhea" id="RHEA:12088"/>
        <dbReference type="ChEBI" id="CHEBI:15378"/>
        <dbReference type="ChEBI" id="CHEBI:22801"/>
        <dbReference type="ChEBI" id="CHEBI:52639"/>
        <dbReference type="ChEBI" id="CHEBI:58223"/>
        <dbReference type="ChEBI" id="CHEBI:58885"/>
        <dbReference type="EC" id="2.4.1.80"/>
    </reaction>
    <physiologicalReaction direction="left-to-right" evidence="7">
        <dbReference type="Rhea" id="RHEA:12089"/>
    </physiologicalReaction>
</comment>
<comment type="catalytic activity">
    <reaction evidence="1">
        <text>UDP-alpha-D-xylose + an N-acylsphing-4-enine = a beta-D-xylosyl-(1&lt;-&gt;1')-N-acylsphing-4-enine + UDP + H(+)</text>
        <dbReference type="Rhea" id="RHEA:70243"/>
        <dbReference type="ChEBI" id="CHEBI:15378"/>
        <dbReference type="ChEBI" id="CHEBI:52639"/>
        <dbReference type="ChEBI" id="CHEBI:57632"/>
        <dbReference type="ChEBI" id="CHEBI:58223"/>
        <dbReference type="ChEBI" id="CHEBI:189068"/>
    </reaction>
    <physiologicalReaction direction="left-to-right" evidence="1">
        <dbReference type="Rhea" id="RHEA:70244"/>
    </physiologicalReaction>
</comment>
<comment type="catalytic activity">
    <reaction evidence="1">
        <text>N-(9Z-octadecenoyl)-sphing-4-enine + UDP-alpha-D-xylose = beta-D-xylosyl-(1&lt;-&gt;1')-N-(9Z-octadecenoyl)-sphing-4-enine + UDP + H(+)</text>
        <dbReference type="Rhea" id="RHEA:70247"/>
        <dbReference type="ChEBI" id="CHEBI:15378"/>
        <dbReference type="ChEBI" id="CHEBI:57632"/>
        <dbReference type="ChEBI" id="CHEBI:58223"/>
        <dbReference type="ChEBI" id="CHEBI:77996"/>
        <dbReference type="ChEBI" id="CHEBI:189081"/>
    </reaction>
    <physiologicalReaction direction="left-to-right" evidence="1">
        <dbReference type="Rhea" id="RHEA:70248"/>
    </physiologicalReaction>
</comment>
<comment type="pathway">
    <text evidence="4">Lipid metabolism; sphingolipid metabolism.</text>
</comment>
<comment type="subcellular location">
    <subcellularLocation>
        <location evidence="4">Golgi apparatus membrane</location>
        <topology evidence="2">Multi-pass membrane protein</topology>
    </subcellularLocation>
</comment>
<comment type="tissue specificity">
    <text evidence="4">At the late gastrula stage, weakly expressed ubiquitously. As neurulation proceeds (stages 15-16), expression moves towards the dorsal structures: involuted paraxial mesoderm and neural folds. In the tailbud embryo (stage 28), expression is restricted to the notochord. At later stages (stage 35), expression remains in the notochord and also appears weakly in the cephalic region.</text>
</comment>
<comment type="developmental stage">
    <text evidence="4">Expressed both maternally and zygotically. Expressed at all stages of oogenesis except in previtellogenic oocytes. During embryogenesis, weakly expressed as early as the one-cell stage shortly after fertilization, and remains at a relatively uniform level throughout embryogenesis, persisting at least until stage 35 (early tadpole).</text>
</comment>
<comment type="domain">
    <text evidence="2">The D1, D2, D3, (Q/R)XXRW motif is a critical part of the GCS active site, involved in catalysis and UDP-sugar binding.</text>
</comment>
<comment type="similarity">
    <text evidence="3">Belongs to the glycosyltransferase 2 family.</text>
</comment>
<name>CEGTA_XENLA</name>
<accession>Q8AY29</accession>
<accession>Q5FWQ7</accession>
<evidence type="ECO:0000250" key="1">
    <source>
        <dbReference type="UniProtKB" id="Q16739"/>
    </source>
</evidence>
<evidence type="ECO:0000250" key="2">
    <source>
        <dbReference type="UniProtKB" id="Q9R0E0"/>
    </source>
</evidence>
<evidence type="ECO:0000255" key="3"/>
<evidence type="ECO:0000269" key="4">
    <source>
    </source>
</evidence>
<evidence type="ECO:0000303" key="5">
    <source>
    </source>
</evidence>
<evidence type="ECO:0000305" key="6"/>
<evidence type="ECO:0000305" key="7">
    <source>
    </source>
</evidence>
<evidence type="ECO:0000312" key="8">
    <source>
        <dbReference type="EMBL" id="AAH89245.1"/>
    </source>
</evidence>
<evidence type="ECO:0000312" key="9">
    <source>
        <dbReference type="EMBL" id="AAM49061.1"/>
    </source>
</evidence>